<reference key="1">
    <citation type="submission" date="2005-11" db="EMBL/GenBank/DDBJ databases">
        <authorList>
            <consortium name="NIH - Mammalian Gene Collection (MGC) project"/>
        </authorList>
    </citation>
    <scope>NUCLEOTIDE SEQUENCE [LARGE SCALE MRNA]</scope>
    <source>
        <strain>Crossbred X Angus</strain>
        <tissue>Liver</tissue>
    </source>
</reference>
<dbReference type="EMBL" id="BC109919">
    <property type="protein sequence ID" value="AAI09920.1"/>
    <property type="molecule type" value="mRNA"/>
</dbReference>
<dbReference type="RefSeq" id="NP_001035679.1">
    <property type="nucleotide sequence ID" value="NM_001040589.2"/>
</dbReference>
<dbReference type="SMR" id="Q32KU9"/>
<dbReference type="FunCoup" id="Q32KU9">
    <property type="interactions" value="117"/>
</dbReference>
<dbReference type="STRING" id="9913.ENSBTAP00000043481"/>
<dbReference type="PaxDb" id="9913-ENSBTAP00000043481"/>
<dbReference type="Ensembl" id="ENSBTAT00000046158.2">
    <property type="protein sequence ID" value="ENSBTAP00000043481.1"/>
    <property type="gene ID" value="ENSBTAG00000032531.2"/>
</dbReference>
<dbReference type="GeneID" id="616088"/>
<dbReference type="KEGG" id="bta:616088"/>
<dbReference type="CTD" id="389125"/>
<dbReference type="VEuPathDB" id="HostDB:ENSBTAG00000032531"/>
<dbReference type="VGNC" id="VGNC:110056">
    <property type="gene designation" value="MUSTN1"/>
</dbReference>
<dbReference type="eggNOG" id="ENOG502S75P">
    <property type="taxonomic scope" value="Eukaryota"/>
</dbReference>
<dbReference type="GeneTree" id="ENSGT00940000153920"/>
<dbReference type="HOGENOM" id="CLU_193377_0_0_1"/>
<dbReference type="InParanoid" id="Q32KU9"/>
<dbReference type="OMA" id="CEQMGSV"/>
<dbReference type="OrthoDB" id="9976882at2759"/>
<dbReference type="TreeFam" id="TF330732"/>
<dbReference type="Proteomes" id="UP000009136">
    <property type="component" value="Chromosome 22"/>
</dbReference>
<dbReference type="Bgee" id="ENSBTAG00000032531">
    <property type="expression patterns" value="Expressed in laryngeal cartilage and 102 other cell types or tissues"/>
</dbReference>
<dbReference type="GO" id="GO:0005737">
    <property type="term" value="C:cytoplasm"/>
    <property type="evidence" value="ECO:0007669"/>
    <property type="project" value="UniProtKB-SubCell"/>
</dbReference>
<dbReference type="GO" id="GO:0005576">
    <property type="term" value="C:extracellular region"/>
    <property type="evidence" value="ECO:0007669"/>
    <property type="project" value="UniProtKB-SubCell"/>
</dbReference>
<dbReference type="GO" id="GO:0005634">
    <property type="term" value="C:nucleus"/>
    <property type="evidence" value="ECO:0000250"/>
    <property type="project" value="UniProtKB"/>
</dbReference>
<dbReference type="GO" id="GO:0002062">
    <property type="term" value="P:chondrocyte differentiation"/>
    <property type="evidence" value="ECO:0007669"/>
    <property type="project" value="InterPro"/>
</dbReference>
<dbReference type="GO" id="GO:0035988">
    <property type="term" value="P:chondrocyte proliferation"/>
    <property type="evidence" value="ECO:0007669"/>
    <property type="project" value="InterPro"/>
</dbReference>
<dbReference type="GO" id="GO:0042593">
    <property type="term" value="P:glucose homeostasis"/>
    <property type="evidence" value="ECO:0000250"/>
    <property type="project" value="UniProtKB"/>
</dbReference>
<dbReference type="GO" id="GO:0007517">
    <property type="term" value="P:muscle organ development"/>
    <property type="evidence" value="ECO:0007669"/>
    <property type="project" value="UniProtKB-KW"/>
</dbReference>
<dbReference type="GO" id="GO:0032332">
    <property type="term" value="P:positive regulation of chondrocyte differentiation"/>
    <property type="evidence" value="ECO:0007669"/>
    <property type="project" value="Ensembl"/>
</dbReference>
<dbReference type="GO" id="GO:1902732">
    <property type="term" value="P:positive regulation of chondrocyte proliferation"/>
    <property type="evidence" value="ECO:0007669"/>
    <property type="project" value="Ensembl"/>
</dbReference>
<dbReference type="GO" id="GO:0010628">
    <property type="term" value="P:positive regulation of gene expression"/>
    <property type="evidence" value="ECO:0007669"/>
    <property type="project" value="Ensembl"/>
</dbReference>
<dbReference type="GO" id="GO:0045663">
    <property type="term" value="P:positive regulation of myoblast differentiation"/>
    <property type="evidence" value="ECO:0000250"/>
    <property type="project" value="UniProtKB"/>
</dbReference>
<dbReference type="GO" id="GO:1902730">
    <property type="term" value="P:positive regulation of proteoglycan biosynthetic process"/>
    <property type="evidence" value="ECO:0007669"/>
    <property type="project" value="Ensembl"/>
</dbReference>
<dbReference type="GO" id="GO:0042246">
    <property type="term" value="P:tissue regeneration"/>
    <property type="evidence" value="ECO:0007669"/>
    <property type="project" value="InterPro"/>
</dbReference>
<dbReference type="InterPro" id="IPR031394">
    <property type="entry name" value="MUSTN1"/>
</dbReference>
<dbReference type="Pfam" id="PF15682">
    <property type="entry name" value="Mustang"/>
    <property type="match status" value="1"/>
</dbReference>
<evidence type="ECO:0000250" key="1">
    <source>
        <dbReference type="UniProtKB" id="Q80XX4"/>
    </source>
</evidence>
<evidence type="ECO:0000250" key="2">
    <source>
        <dbReference type="UniProtKB" id="Q99JI1"/>
    </source>
</evidence>
<evidence type="ECO:0000255" key="3"/>
<evidence type="ECO:0000256" key="4">
    <source>
        <dbReference type="SAM" id="MobiDB-lite"/>
    </source>
</evidence>
<evidence type="ECO:0000305" key="5"/>
<sequence>MSQAGAQEAPIKKKRPPVKEEDLKGARGNLTKNQEIKSKTYQVMRECEQAGSTAPSVFSRARTGAETVFEKPKAGPAKSVFG</sequence>
<protein>
    <recommendedName>
        <fullName>Musculoskeletal embryonic nuclear protein 1</fullName>
    </recommendedName>
</protein>
<feature type="chain" id="PRO_0000299446" description="Musculoskeletal embryonic nuclear protein 1">
    <location>
        <begin position="1"/>
        <end position="82"/>
    </location>
</feature>
<feature type="region of interest" description="Disordered" evidence="4">
    <location>
        <begin position="1"/>
        <end position="34"/>
    </location>
</feature>
<feature type="short sequence motif" description="Nuclear localization signal" evidence="3">
    <location>
        <begin position="10"/>
        <end position="18"/>
    </location>
</feature>
<feature type="modified residue" description="Phosphoserine" evidence="1">
    <location>
        <position position="2"/>
    </location>
</feature>
<comment type="function">
    <text evidence="2">Required for chondrocyte development and proliferation. Plays a role in myoblast differentiation and fusion. Modulates skeletal muscle extracellular matrix composition. Plays a role in skeletal muscle function. Plays a role in glucose homeostasis.</text>
</comment>
<comment type="subcellular location">
    <subcellularLocation>
        <location evidence="2">Nucleus</location>
    </subcellularLocation>
    <subcellularLocation>
        <location evidence="2">Cytoplasm</location>
    </subcellularLocation>
    <subcellularLocation>
        <location evidence="2">Secreted</location>
        <location evidence="2">Extracellular space</location>
    </subcellularLocation>
    <text evidence="2">Secreted from smooth muscle cells into the muscle extracellular space.</text>
</comment>
<comment type="similarity">
    <text evidence="5">Belongs to the MUSTN1 family.</text>
</comment>
<name>MSTN1_BOVIN</name>
<organism>
    <name type="scientific">Bos taurus</name>
    <name type="common">Bovine</name>
    <dbReference type="NCBI Taxonomy" id="9913"/>
    <lineage>
        <taxon>Eukaryota</taxon>
        <taxon>Metazoa</taxon>
        <taxon>Chordata</taxon>
        <taxon>Craniata</taxon>
        <taxon>Vertebrata</taxon>
        <taxon>Euteleostomi</taxon>
        <taxon>Mammalia</taxon>
        <taxon>Eutheria</taxon>
        <taxon>Laurasiatheria</taxon>
        <taxon>Artiodactyla</taxon>
        <taxon>Ruminantia</taxon>
        <taxon>Pecora</taxon>
        <taxon>Bovidae</taxon>
        <taxon>Bovinae</taxon>
        <taxon>Bos</taxon>
    </lineage>
</organism>
<keyword id="KW-0891">Chondrogenesis</keyword>
<keyword id="KW-0963">Cytoplasm</keyword>
<keyword id="KW-0517">Myogenesis</keyword>
<keyword id="KW-0539">Nucleus</keyword>
<keyword id="KW-0597">Phosphoprotein</keyword>
<keyword id="KW-1185">Reference proteome</keyword>
<keyword id="KW-0964">Secreted</keyword>
<accession>Q32KU9</accession>
<proteinExistence type="inferred from homology"/>
<gene>
    <name type="primary">MUSTN1</name>
</gene>